<reference key="1">
    <citation type="journal article" date="2001" name="Science">
        <title>Mechanisms of evolution in Rickettsia conorii and R. prowazekii.</title>
        <authorList>
            <person name="Ogata H."/>
            <person name="Audic S."/>
            <person name="Renesto-Audiffren P."/>
            <person name="Fournier P.-E."/>
            <person name="Barbe V."/>
            <person name="Samson D."/>
            <person name="Roux V."/>
            <person name="Cossart P."/>
            <person name="Weissenbach J."/>
            <person name="Claverie J.-M."/>
            <person name="Raoult D."/>
        </authorList>
    </citation>
    <scope>NUCLEOTIDE SEQUENCE [LARGE SCALE GENOMIC DNA]</scope>
    <source>
        <strain>ATCC VR-613 / Malish 7</strain>
    </source>
</reference>
<evidence type="ECO:0000255" key="1">
    <source>
        <dbReference type="HAMAP-Rule" id="MF_00306"/>
    </source>
</evidence>
<comment type="function">
    <text evidence="1">Involved in targeting and insertion of nascent membrane proteins into the cytoplasmic membrane. Binds to the hydrophobic signal sequence of the ribosome-nascent chain (RNC) as it emerges from the ribosomes. The SRP-RNC complex is then targeted to the cytoplasmic membrane where it interacts with the SRP receptor FtsY. Interaction with FtsY leads to the transfer of the RNC complex to the Sec translocase for insertion into the membrane, the hydrolysis of GTP by both Ffh and FtsY, and the dissociation of the SRP-FtsY complex into the individual components.</text>
</comment>
<comment type="catalytic activity">
    <reaction evidence="1">
        <text>GTP + H2O = GDP + phosphate + H(+)</text>
        <dbReference type="Rhea" id="RHEA:19669"/>
        <dbReference type="ChEBI" id="CHEBI:15377"/>
        <dbReference type="ChEBI" id="CHEBI:15378"/>
        <dbReference type="ChEBI" id="CHEBI:37565"/>
        <dbReference type="ChEBI" id="CHEBI:43474"/>
        <dbReference type="ChEBI" id="CHEBI:58189"/>
        <dbReference type="EC" id="3.6.5.4"/>
    </reaction>
</comment>
<comment type="subunit">
    <text evidence="1">Part of the signal recognition particle protein translocation system, which is composed of SRP and FtsY. SRP is a ribonucleoprotein composed of Ffh and a 4.5S RNA molecule.</text>
</comment>
<comment type="subcellular location">
    <subcellularLocation>
        <location evidence="1">Cytoplasm</location>
    </subcellularLocation>
    <text evidence="1">The SRP-RNC complex is targeted to the cytoplasmic membrane.</text>
</comment>
<comment type="domain">
    <text evidence="1">Composed of three domains: the N-terminal N domain, which is responsible for interactions with the ribosome, the central G domain, which binds GTP, and the C-terminal M domain, which binds the RNA and the signal sequence of the RNC.</text>
</comment>
<comment type="similarity">
    <text evidence="1">Belongs to the GTP-binding SRP family. SRP54 subfamily.</text>
</comment>
<name>SRP54_RICCN</name>
<sequence length="449" mass="49252">MFKTLTQNLTKIFDKLVSSGILTEAQIDAAMRDIRVALLESDVALPVIKDFIAEVKQKALGQEVIKSVSPGQMIIKIIHEEMINLLASSKSETKLNLNSKPPVNFLMVGLQGSGKTTASSKLALRLRNQNKKVLLVSLDTYRPAAQEQLAILANSVQINSLPIVQGEKPLDIVKRAIAEAKISAYDVVIYDTAGRTQIDKAMMEEALAIKKIVEPTETLLVIDSMTGQDAVVTASSFNEKLAISGLILSRIDGDSKGGAALSVKYITKKPIKFLSSGENLIDLEEFDAERLASRILDMGDIISFVEKAASIVDREEAEKTAAKLKKGKFDLNDYLQQMRSIKKMGGFGSILSMLPGSGKIMDQIDQSKLNSKIIEHQEAIILSMTPKERKNPDIINASRRKRIAVGAGTTVQKVNILLKQYKQISEIMKKVSKMNPKNLLRSGIGKLFS</sequence>
<organism>
    <name type="scientific">Rickettsia conorii (strain ATCC VR-613 / Malish 7)</name>
    <dbReference type="NCBI Taxonomy" id="272944"/>
    <lineage>
        <taxon>Bacteria</taxon>
        <taxon>Pseudomonadati</taxon>
        <taxon>Pseudomonadota</taxon>
        <taxon>Alphaproteobacteria</taxon>
        <taxon>Rickettsiales</taxon>
        <taxon>Rickettsiaceae</taxon>
        <taxon>Rickettsieae</taxon>
        <taxon>Rickettsia</taxon>
        <taxon>spotted fever group</taxon>
    </lineage>
</organism>
<protein>
    <recommendedName>
        <fullName evidence="1">Signal recognition particle protein</fullName>
        <ecNumber evidence="1">3.6.5.4</ecNumber>
    </recommendedName>
    <alternativeName>
        <fullName evidence="1">Fifty-four homolog</fullName>
    </alternativeName>
</protein>
<proteinExistence type="inferred from homology"/>
<accession>Q92J55</accession>
<feature type="chain" id="PRO_0000101165" description="Signal recognition particle protein">
    <location>
        <begin position="1"/>
        <end position="449"/>
    </location>
</feature>
<feature type="binding site" evidence="1">
    <location>
        <begin position="109"/>
        <end position="116"/>
    </location>
    <ligand>
        <name>GTP</name>
        <dbReference type="ChEBI" id="CHEBI:37565"/>
    </ligand>
</feature>
<feature type="binding site" evidence="1">
    <location>
        <begin position="191"/>
        <end position="195"/>
    </location>
    <ligand>
        <name>GTP</name>
        <dbReference type="ChEBI" id="CHEBI:37565"/>
    </ligand>
</feature>
<feature type="binding site" evidence="1">
    <location>
        <begin position="249"/>
        <end position="252"/>
    </location>
    <ligand>
        <name>GTP</name>
        <dbReference type="ChEBI" id="CHEBI:37565"/>
    </ligand>
</feature>
<dbReference type="EC" id="3.6.5.4" evidence="1"/>
<dbReference type="EMBL" id="AE006914">
    <property type="protein sequence ID" value="AAL02752.1"/>
    <property type="molecule type" value="Genomic_DNA"/>
</dbReference>
<dbReference type="PIR" id="F97726">
    <property type="entry name" value="F97726"/>
</dbReference>
<dbReference type="RefSeq" id="WP_010976880.1">
    <property type="nucleotide sequence ID" value="NC_003103.1"/>
</dbReference>
<dbReference type="SMR" id="Q92J55"/>
<dbReference type="GeneID" id="927976"/>
<dbReference type="KEGG" id="rco:RC0214"/>
<dbReference type="PATRIC" id="fig|272944.4.peg.244"/>
<dbReference type="HOGENOM" id="CLU_009301_6_0_5"/>
<dbReference type="Proteomes" id="UP000000816">
    <property type="component" value="Chromosome"/>
</dbReference>
<dbReference type="GO" id="GO:0048500">
    <property type="term" value="C:signal recognition particle"/>
    <property type="evidence" value="ECO:0007669"/>
    <property type="project" value="UniProtKB-UniRule"/>
</dbReference>
<dbReference type="GO" id="GO:0008312">
    <property type="term" value="F:7S RNA binding"/>
    <property type="evidence" value="ECO:0007669"/>
    <property type="project" value="InterPro"/>
</dbReference>
<dbReference type="GO" id="GO:0016887">
    <property type="term" value="F:ATP hydrolysis activity"/>
    <property type="evidence" value="ECO:0007669"/>
    <property type="project" value="InterPro"/>
</dbReference>
<dbReference type="GO" id="GO:0005525">
    <property type="term" value="F:GTP binding"/>
    <property type="evidence" value="ECO:0007669"/>
    <property type="project" value="UniProtKB-UniRule"/>
</dbReference>
<dbReference type="GO" id="GO:0003924">
    <property type="term" value="F:GTPase activity"/>
    <property type="evidence" value="ECO:0007669"/>
    <property type="project" value="UniProtKB-UniRule"/>
</dbReference>
<dbReference type="GO" id="GO:0006614">
    <property type="term" value="P:SRP-dependent cotranslational protein targeting to membrane"/>
    <property type="evidence" value="ECO:0007669"/>
    <property type="project" value="InterPro"/>
</dbReference>
<dbReference type="CDD" id="cd18539">
    <property type="entry name" value="SRP_G"/>
    <property type="match status" value="1"/>
</dbReference>
<dbReference type="Gene3D" id="3.40.50.300">
    <property type="entry name" value="P-loop containing nucleotide triphosphate hydrolases"/>
    <property type="match status" value="1"/>
</dbReference>
<dbReference type="Gene3D" id="1.20.120.140">
    <property type="entry name" value="Signal recognition particle SRP54, nucleotide-binding domain"/>
    <property type="match status" value="1"/>
</dbReference>
<dbReference type="Gene3D" id="1.10.260.30">
    <property type="entry name" value="Signal recognition particle, SRP54 subunit, M-domain"/>
    <property type="match status" value="1"/>
</dbReference>
<dbReference type="HAMAP" id="MF_00306">
    <property type="entry name" value="SRP54"/>
    <property type="match status" value="1"/>
</dbReference>
<dbReference type="InterPro" id="IPR003593">
    <property type="entry name" value="AAA+_ATPase"/>
</dbReference>
<dbReference type="InterPro" id="IPR027417">
    <property type="entry name" value="P-loop_NTPase"/>
</dbReference>
<dbReference type="InterPro" id="IPR036891">
    <property type="entry name" value="Signal_recog_part_SRP54_M_sf"/>
</dbReference>
<dbReference type="InterPro" id="IPR013822">
    <property type="entry name" value="Signal_recog_particl_SRP54_hlx"/>
</dbReference>
<dbReference type="InterPro" id="IPR004125">
    <property type="entry name" value="Signal_recog_particle_SRP54_M"/>
</dbReference>
<dbReference type="InterPro" id="IPR004780">
    <property type="entry name" value="SRP"/>
</dbReference>
<dbReference type="InterPro" id="IPR022941">
    <property type="entry name" value="SRP54"/>
</dbReference>
<dbReference type="InterPro" id="IPR000897">
    <property type="entry name" value="SRP54_GTPase_dom"/>
</dbReference>
<dbReference type="InterPro" id="IPR042101">
    <property type="entry name" value="SRP54_N_sf"/>
</dbReference>
<dbReference type="NCBIfam" id="TIGR00959">
    <property type="entry name" value="ffh"/>
    <property type="match status" value="1"/>
</dbReference>
<dbReference type="PANTHER" id="PTHR11564">
    <property type="entry name" value="SIGNAL RECOGNITION PARTICLE 54K PROTEIN SRP54"/>
    <property type="match status" value="1"/>
</dbReference>
<dbReference type="PANTHER" id="PTHR11564:SF5">
    <property type="entry name" value="SIGNAL RECOGNITION PARTICLE SUBUNIT SRP54"/>
    <property type="match status" value="1"/>
</dbReference>
<dbReference type="Pfam" id="PF00448">
    <property type="entry name" value="SRP54"/>
    <property type="match status" value="1"/>
</dbReference>
<dbReference type="Pfam" id="PF02881">
    <property type="entry name" value="SRP54_N"/>
    <property type="match status" value="1"/>
</dbReference>
<dbReference type="Pfam" id="PF02978">
    <property type="entry name" value="SRP_SPB"/>
    <property type="match status" value="1"/>
</dbReference>
<dbReference type="SMART" id="SM00382">
    <property type="entry name" value="AAA"/>
    <property type="match status" value="1"/>
</dbReference>
<dbReference type="SMART" id="SM00962">
    <property type="entry name" value="SRP54"/>
    <property type="match status" value="1"/>
</dbReference>
<dbReference type="SMART" id="SM00963">
    <property type="entry name" value="SRP54_N"/>
    <property type="match status" value="1"/>
</dbReference>
<dbReference type="SUPFAM" id="SSF52540">
    <property type="entry name" value="P-loop containing nucleoside triphosphate hydrolases"/>
    <property type="match status" value="1"/>
</dbReference>
<dbReference type="SUPFAM" id="SSF47446">
    <property type="entry name" value="Signal peptide-binding domain"/>
    <property type="match status" value="1"/>
</dbReference>
<dbReference type="PROSITE" id="PS00300">
    <property type="entry name" value="SRP54"/>
    <property type="match status" value="1"/>
</dbReference>
<gene>
    <name evidence="1" type="primary">ffh</name>
    <name type="ordered locus">RC0214</name>
</gene>
<keyword id="KW-0963">Cytoplasm</keyword>
<keyword id="KW-0342">GTP-binding</keyword>
<keyword id="KW-0378">Hydrolase</keyword>
<keyword id="KW-0547">Nucleotide-binding</keyword>
<keyword id="KW-0687">Ribonucleoprotein</keyword>
<keyword id="KW-0694">RNA-binding</keyword>
<keyword id="KW-0733">Signal recognition particle</keyword>